<comment type="similarity">
    <text evidence="2">Belongs to the class I-like SAM-binding methyltransferase superfamily. RNA M5U methyltransferase family.</text>
</comment>
<protein>
    <recommendedName>
        <fullName>Uncharacterized RNA methyltransferase LJ_1606</fullName>
        <ecNumber>2.1.1.-</ecNumber>
    </recommendedName>
</protein>
<sequence length="459" mass="52283">MTKFTKNKQEKNIIITIKRLGINGEGIGYYKKKIIFIPGALPNEVVVAKIVDRHPHYLEGELVRIKEKSPDRVTFPKGVDPAVGGLELAHLSYPKQLEFKQHLILESLRKYHPRDYIKYKVKKTIPTPNAWNYRNKAQYQIEFNKGKSKLGLYAPNSRRLIDLPDMPTQTKETQKVEREIKKLIDKLHIRIADFRRHTDGIKTIAVRQSNATGEIQVTLITIGKKIKDLKLLASHIMKLPNVVSVFQNETQWQNPQVWGNKTIKLFGKSHITEEILGKKFKLSPRAFFQLNPEQTTTLYSEALKYLDLTPDQTLIDAYAGVGTLGILASDQVRQVIGIESIPEAVIDAQENCRLNHVRNAEYIQGNVEKLLPELKNQGVPINALIVDPPRTGLSKKLIKTLLEVKPETFVYVSCNPATLAKDLVLLSDAYDVRVIQPVDMMPQTPRWEGVTKLVLRKNK</sequence>
<evidence type="ECO:0000255" key="1">
    <source>
        <dbReference type="PROSITE-ProRule" id="PRU00208"/>
    </source>
</evidence>
<evidence type="ECO:0000255" key="2">
    <source>
        <dbReference type="PROSITE-ProRule" id="PRU01024"/>
    </source>
</evidence>
<organism>
    <name type="scientific">Lactobacillus johnsonii (strain CNCM I-12250 / La1 / NCC 533)</name>
    <dbReference type="NCBI Taxonomy" id="257314"/>
    <lineage>
        <taxon>Bacteria</taxon>
        <taxon>Bacillati</taxon>
        <taxon>Bacillota</taxon>
        <taxon>Bacilli</taxon>
        <taxon>Lactobacillales</taxon>
        <taxon>Lactobacillaceae</taxon>
        <taxon>Lactobacillus</taxon>
    </lineage>
</organism>
<reference key="1">
    <citation type="journal article" date="2004" name="Proc. Natl. Acad. Sci. U.S.A.">
        <title>The genome sequence of the probiotic intestinal bacterium Lactobacillus johnsonii NCC 533.</title>
        <authorList>
            <person name="Pridmore R.D."/>
            <person name="Berger B."/>
            <person name="Desiere F."/>
            <person name="Vilanova D."/>
            <person name="Barretto C."/>
            <person name="Pittet A.-C."/>
            <person name="Zwahlen M.-C."/>
            <person name="Rouvet M."/>
            <person name="Altermann E."/>
            <person name="Barrangou R."/>
            <person name="Mollet B."/>
            <person name="Mercenier A."/>
            <person name="Klaenhammer T."/>
            <person name="Arigoni F."/>
            <person name="Schell M.A."/>
        </authorList>
    </citation>
    <scope>NUCLEOTIDE SEQUENCE [LARGE SCALE GENOMIC DNA]</scope>
    <source>
        <strain>CNCM I-1225 / La1 / NCC 533</strain>
    </source>
</reference>
<accession>Q74IG2</accession>
<feature type="chain" id="PRO_0000161985" description="Uncharacterized RNA methyltransferase LJ_1606">
    <location>
        <begin position="1"/>
        <end position="459"/>
    </location>
</feature>
<feature type="domain" description="TRAM" evidence="1">
    <location>
        <begin position="6"/>
        <end position="64"/>
    </location>
</feature>
<feature type="active site" description="Nucleophile" evidence="2">
    <location>
        <position position="414"/>
    </location>
</feature>
<feature type="binding site" evidence="2">
    <location>
        <position position="289"/>
    </location>
    <ligand>
        <name>S-adenosyl-L-methionine</name>
        <dbReference type="ChEBI" id="CHEBI:59789"/>
    </ligand>
</feature>
<feature type="binding site" evidence="2">
    <location>
        <position position="318"/>
    </location>
    <ligand>
        <name>S-adenosyl-L-methionine</name>
        <dbReference type="ChEBI" id="CHEBI:59789"/>
    </ligand>
</feature>
<feature type="binding site" evidence="2">
    <location>
        <position position="339"/>
    </location>
    <ligand>
        <name>S-adenosyl-L-methionine</name>
        <dbReference type="ChEBI" id="CHEBI:59789"/>
    </ligand>
</feature>
<feature type="binding site" evidence="2">
    <location>
        <position position="387"/>
    </location>
    <ligand>
        <name>S-adenosyl-L-methionine</name>
        <dbReference type="ChEBI" id="CHEBI:59789"/>
    </ligand>
</feature>
<gene>
    <name type="ordered locus">LJ_1606</name>
</gene>
<dbReference type="EC" id="2.1.1.-"/>
<dbReference type="EMBL" id="AE017198">
    <property type="protein sequence ID" value="AAS09376.1"/>
    <property type="molecule type" value="Genomic_DNA"/>
</dbReference>
<dbReference type="RefSeq" id="WP_011162306.1">
    <property type="nucleotide sequence ID" value="NC_005362.1"/>
</dbReference>
<dbReference type="SMR" id="Q74IG2"/>
<dbReference type="GeneID" id="83570801"/>
<dbReference type="KEGG" id="ljo:LJ_1606"/>
<dbReference type="PATRIC" id="fig|257314.6.peg.1427"/>
<dbReference type="eggNOG" id="COG2265">
    <property type="taxonomic scope" value="Bacteria"/>
</dbReference>
<dbReference type="HOGENOM" id="CLU_014689_7_1_9"/>
<dbReference type="Proteomes" id="UP000000581">
    <property type="component" value="Chromosome"/>
</dbReference>
<dbReference type="GO" id="GO:0070041">
    <property type="term" value="F:rRNA (uridine-C5-)-methyltransferase activity"/>
    <property type="evidence" value="ECO:0007669"/>
    <property type="project" value="TreeGrafter"/>
</dbReference>
<dbReference type="GO" id="GO:0070475">
    <property type="term" value="P:rRNA base methylation"/>
    <property type="evidence" value="ECO:0007669"/>
    <property type="project" value="TreeGrafter"/>
</dbReference>
<dbReference type="CDD" id="cd02440">
    <property type="entry name" value="AdoMet_MTases"/>
    <property type="match status" value="1"/>
</dbReference>
<dbReference type="FunFam" id="3.40.50.150:FF:000009">
    <property type="entry name" value="23S rRNA (Uracil(1939)-C(5))-methyltransferase RlmD"/>
    <property type="match status" value="1"/>
</dbReference>
<dbReference type="Gene3D" id="2.40.50.1070">
    <property type="match status" value="1"/>
</dbReference>
<dbReference type="Gene3D" id="2.40.50.140">
    <property type="entry name" value="Nucleic acid-binding proteins"/>
    <property type="match status" value="1"/>
</dbReference>
<dbReference type="Gene3D" id="3.40.50.150">
    <property type="entry name" value="Vaccinia Virus protein VP39"/>
    <property type="match status" value="1"/>
</dbReference>
<dbReference type="InterPro" id="IPR030390">
    <property type="entry name" value="MeTrfase_TrmA_AS"/>
</dbReference>
<dbReference type="InterPro" id="IPR012340">
    <property type="entry name" value="NA-bd_OB-fold"/>
</dbReference>
<dbReference type="InterPro" id="IPR029063">
    <property type="entry name" value="SAM-dependent_MTases_sf"/>
</dbReference>
<dbReference type="InterPro" id="IPR002792">
    <property type="entry name" value="TRAM_dom"/>
</dbReference>
<dbReference type="InterPro" id="IPR010280">
    <property type="entry name" value="U5_MeTrfase_fam"/>
</dbReference>
<dbReference type="NCBIfam" id="TIGR00479">
    <property type="entry name" value="rumA"/>
    <property type="match status" value="1"/>
</dbReference>
<dbReference type="PANTHER" id="PTHR11061:SF45">
    <property type="match status" value="1"/>
</dbReference>
<dbReference type="PANTHER" id="PTHR11061">
    <property type="entry name" value="RNA M5U METHYLTRANSFERASE"/>
    <property type="match status" value="1"/>
</dbReference>
<dbReference type="Pfam" id="PF01938">
    <property type="entry name" value="TRAM"/>
    <property type="match status" value="1"/>
</dbReference>
<dbReference type="Pfam" id="PF05958">
    <property type="entry name" value="tRNA_U5-meth_tr"/>
    <property type="match status" value="1"/>
</dbReference>
<dbReference type="SUPFAM" id="SSF50249">
    <property type="entry name" value="Nucleic acid-binding proteins"/>
    <property type="match status" value="1"/>
</dbReference>
<dbReference type="SUPFAM" id="SSF53335">
    <property type="entry name" value="S-adenosyl-L-methionine-dependent methyltransferases"/>
    <property type="match status" value="1"/>
</dbReference>
<dbReference type="PROSITE" id="PS51687">
    <property type="entry name" value="SAM_MT_RNA_M5U"/>
    <property type="match status" value="1"/>
</dbReference>
<dbReference type="PROSITE" id="PS50926">
    <property type="entry name" value="TRAM"/>
    <property type="match status" value="1"/>
</dbReference>
<dbReference type="PROSITE" id="PS01230">
    <property type="entry name" value="TRMA_1"/>
    <property type="match status" value="1"/>
</dbReference>
<proteinExistence type="inferred from homology"/>
<name>Y1606_LACJO</name>
<keyword id="KW-0489">Methyltransferase</keyword>
<keyword id="KW-0949">S-adenosyl-L-methionine</keyword>
<keyword id="KW-0808">Transferase</keyword>